<dbReference type="EC" id="1.1.1.37" evidence="1"/>
<dbReference type="EMBL" id="CP000077">
    <property type="protein sequence ID" value="AAY79663.1"/>
    <property type="molecule type" value="Genomic_DNA"/>
</dbReference>
<dbReference type="PIR" id="S03958">
    <property type="entry name" value="S03958"/>
</dbReference>
<dbReference type="RefSeq" id="WP_011277164.1">
    <property type="nucleotide sequence ID" value="NC_007181.1"/>
</dbReference>
<dbReference type="SMR" id="P11386"/>
<dbReference type="STRING" id="330779.Saci_0246"/>
<dbReference type="GeneID" id="14550776"/>
<dbReference type="KEGG" id="sai:Saci_0246"/>
<dbReference type="PATRIC" id="fig|330779.12.peg.243"/>
<dbReference type="eggNOG" id="arCOG00246">
    <property type="taxonomic scope" value="Archaea"/>
</dbReference>
<dbReference type="HOGENOM" id="CLU_045401_2_1_2"/>
<dbReference type="BRENDA" id="1.1.1.37">
    <property type="organism ID" value="6160"/>
</dbReference>
<dbReference type="Proteomes" id="UP000001018">
    <property type="component" value="Chromosome"/>
</dbReference>
<dbReference type="GO" id="GO:0004459">
    <property type="term" value="F:L-lactate dehydrogenase activity"/>
    <property type="evidence" value="ECO:0007669"/>
    <property type="project" value="TreeGrafter"/>
</dbReference>
<dbReference type="GO" id="GO:0030060">
    <property type="term" value="F:L-malate dehydrogenase (NAD+) activity"/>
    <property type="evidence" value="ECO:0007669"/>
    <property type="project" value="UniProtKB-EC"/>
</dbReference>
<dbReference type="GO" id="GO:0006089">
    <property type="term" value="P:lactate metabolic process"/>
    <property type="evidence" value="ECO:0007669"/>
    <property type="project" value="TreeGrafter"/>
</dbReference>
<dbReference type="GO" id="GO:0006099">
    <property type="term" value="P:tricarboxylic acid cycle"/>
    <property type="evidence" value="ECO:0007669"/>
    <property type="project" value="UniProtKB-KW"/>
</dbReference>
<dbReference type="CDD" id="cd00300">
    <property type="entry name" value="LDH_like"/>
    <property type="match status" value="1"/>
</dbReference>
<dbReference type="Gene3D" id="3.90.110.10">
    <property type="entry name" value="Lactate dehydrogenase/glycoside hydrolase, family 4, C-terminal"/>
    <property type="match status" value="1"/>
</dbReference>
<dbReference type="Gene3D" id="3.40.50.720">
    <property type="entry name" value="NAD(P)-binding Rossmann-like Domain"/>
    <property type="match status" value="1"/>
</dbReference>
<dbReference type="InterPro" id="IPR001557">
    <property type="entry name" value="L-lactate/malate_DH"/>
</dbReference>
<dbReference type="InterPro" id="IPR022383">
    <property type="entry name" value="Lactate/malate_DH_C"/>
</dbReference>
<dbReference type="InterPro" id="IPR001236">
    <property type="entry name" value="Lactate/malate_DH_N"/>
</dbReference>
<dbReference type="InterPro" id="IPR015955">
    <property type="entry name" value="Lactate_DH/Glyco_Ohase_4_C"/>
</dbReference>
<dbReference type="InterPro" id="IPR036291">
    <property type="entry name" value="NAD(P)-bd_dom_sf"/>
</dbReference>
<dbReference type="PANTHER" id="PTHR43128">
    <property type="entry name" value="L-2-HYDROXYCARBOXYLATE DEHYDROGENASE (NAD(P)(+))"/>
    <property type="match status" value="1"/>
</dbReference>
<dbReference type="PANTHER" id="PTHR43128:SF16">
    <property type="entry name" value="L-LACTATE DEHYDROGENASE"/>
    <property type="match status" value="1"/>
</dbReference>
<dbReference type="Pfam" id="PF02866">
    <property type="entry name" value="Ldh_1_C"/>
    <property type="match status" value="1"/>
</dbReference>
<dbReference type="Pfam" id="PF00056">
    <property type="entry name" value="Ldh_1_N"/>
    <property type="match status" value="1"/>
</dbReference>
<dbReference type="PIRSF" id="PIRSF000102">
    <property type="entry name" value="Lac_mal_DH"/>
    <property type="match status" value="1"/>
</dbReference>
<dbReference type="PRINTS" id="PR00086">
    <property type="entry name" value="LLDHDRGNASE"/>
</dbReference>
<dbReference type="SUPFAM" id="SSF56327">
    <property type="entry name" value="LDH C-terminal domain-like"/>
    <property type="match status" value="1"/>
</dbReference>
<dbReference type="SUPFAM" id="SSF51735">
    <property type="entry name" value="NAD(P)-binding Rossmann-fold domains"/>
    <property type="match status" value="1"/>
</dbReference>
<reference key="1">
    <citation type="journal article" date="2005" name="J. Bacteriol.">
        <title>The genome of Sulfolobus acidocaldarius, a model organism of the Crenarchaeota.</title>
        <authorList>
            <person name="Chen L."/>
            <person name="Bruegger K."/>
            <person name="Skovgaard M."/>
            <person name="Redder P."/>
            <person name="She Q."/>
            <person name="Torarinsson E."/>
            <person name="Greve B."/>
            <person name="Awayez M."/>
            <person name="Zibat A."/>
            <person name="Klenk H.-P."/>
            <person name="Garrett R.A."/>
        </authorList>
    </citation>
    <scope>NUCLEOTIDE SEQUENCE [LARGE SCALE GENOMIC DNA]</scope>
    <source>
        <strain>ATCC 33909 / DSM 639 / JCM 8929 / NBRC 15157 / NCIMB 11770</strain>
    </source>
</reference>
<reference key="2">
    <citation type="journal article" date="1989" name="FEBS Lett.">
        <title>Archaebacterial malate dehydrogenase: the amino-terminal sequence of the enzyme from Sulfolobus acidocaldarius is homologous to the eubacterial and eukaryotic malate dehydrogenases.</title>
        <authorList>
            <person name="Gorisch H."/>
            <person name="Jany K.-D."/>
        </authorList>
    </citation>
    <scope>PROTEIN SEQUENCE OF 2-42</scope>
    <source>
        <strain>ATCC 33909 / DSM 639 / JCM 8929 / NBRC 15157 / NCIMB 11770</strain>
    </source>
</reference>
<gene>
    <name type="primary">mdh</name>
    <name type="ordered locus">Saci_0246</name>
</gene>
<sequence length="306" mass="33563">MVKVAFIGVGRVGQTIAYNTIVNGYADEVMLYDVVPELPEKFEHEIRHALAALRVKTELLSTNNIDDISGADIVVITAGKPRKPGMSRRDLFIDNAKIMIDLAKKLPKKNKGAMYIMVANPVDMMASVFMKYSGENTISTGNQVETMRMRSYIAKKLNIPAYEVGGYVGGEHGEAAMVLWSTVTVKGKPFSESLGVNKAEVEDYVKKIAAEIIRVLGGTTWGPGADIEEVIRSVALNEGKVMSVAFPHKYEDEIIHISEPVVVGRTVGPALTSALDENDKARLSQAIKEVYNVYKSNLKELEQVIS</sequence>
<organism>
    <name type="scientific">Sulfolobus acidocaldarius (strain ATCC 33909 / DSM 639 / JCM 8929 / NBRC 15157 / NCIMB 11770)</name>
    <dbReference type="NCBI Taxonomy" id="330779"/>
    <lineage>
        <taxon>Archaea</taxon>
        <taxon>Thermoproteota</taxon>
        <taxon>Thermoprotei</taxon>
        <taxon>Sulfolobales</taxon>
        <taxon>Sulfolobaceae</taxon>
        <taxon>Sulfolobus</taxon>
    </lineage>
</organism>
<feature type="initiator methionine" description="Removed" evidence="3">
    <location>
        <position position="1"/>
    </location>
</feature>
<feature type="chain" id="PRO_0000113492" description="Malate dehydrogenase">
    <location>
        <begin position="2"/>
        <end position="306"/>
    </location>
</feature>
<feature type="active site" description="Proton acceptor" evidence="2">
    <location>
        <position position="172"/>
    </location>
</feature>
<feature type="binding site" evidence="1">
    <location>
        <begin position="8"/>
        <end position="13"/>
    </location>
    <ligand>
        <name>NAD(+)</name>
        <dbReference type="ChEBI" id="CHEBI:57540"/>
    </ligand>
</feature>
<feature type="binding site" evidence="1">
    <location>
        <position position="33"/>
    </location>
    <ligand>
        <name>NAD(+)</name>
        <dbReference type="ChEBI" id="CHEBI:57540"/>
    </ligand>
</feature>
<feature type="binding site" evidence="2">
    <location>
        <position position="82"/>
    </location>
    <ligand>
        <name>substrate</name>
    </ligand>
</feature>
<feature type="binding site" evidence="2">
    <location>
        <position position="88"/>
    </location>
    <ligand>
        <name>substrate</name>
    </ligand>
</feature>
<feature type="binding site" evidence="1">
    <location>
        <position position="95"/>
    </location>
    <ligand>
        <name>NAD(+)</name>
        <dbReference type="ChEBI" id="CHEBI:57540"/>
    </ligand>
</feature>
<feature type="binding site" evidence="1">
    <location>
        <begin position="118"/>
        <end position="120"/>
    </location>
    <ligand>
        <name>NAD(+)</name>
        <dbReference type="ChEBI" id="CHEBI:57540"/>
    </ligand>
</feature>
<feature type="binding site" evidence="2">
    <location>
        <position position="120"/>
    </location>
    <ligand>
        <name>substrate</name>
    </ligand>
</feature>
<feature type="binding site" evidence="2">
    <location>
        <position position="148"/>
    </location>
    <ligand>
        <name>substrate</name>
    </ligand>
</feature>
<feature type="sequence conflict" description="In Ref. 2; AA sequence." evidence="4" ref="2">
    <original>R</original>
    <variation>RG</variation>
    <location>
        <position position="11"/>
    </location>
</feature>
<feature type="sequence conflict" description="In Ref. 2; AA sequence." evidence="4" ref="2">
    <original>EKF</original>
    <variation>TKK</variation>
    <location>
        <begin position="40"/>
        <end position="42"/>
    </location>
</feature>
<proteinExistence type="evidence at protein level"/>
<keyword id="KW-0903">Direct protein sequencing</keyword>
<keyword id="KW-0520">NAD</keyword>
<keyword id="KW-0560">Oxidoreductase</keyword>
<keyword id="KW-1185">Reference proteome</keyword>
<keyword id="KW-0816">Tricarboxylic acid cycle</keyword>
<protein>
    <recommendedName>
        <fullName evidence="1">Malate dehydrogenase</fullName>
        <ecNumber evidence="1">1.1.1.37</ecNumber>
    </recommendedName>
</protein>
<accession>P11386</accession>
<accession>Q4JC16</accession>
<evidence type="ECO:0000250" key="1">
    <source>
        <dbReference type="UniProtKB" id="O08349"/>
    </source>
</evidence>
<evidence type="ECO:0000250" key="2">
    <source>
        <dbReference type="UniProtKB" id="P61889"/>
    </source>
</evidence>
<evidence type="ECO:0000269" key="3">
    <source>
    </source>
</evidence>
<evidence type="ECO:0000305" key="4"/>
<name>MDH_SULAC</name>
<comment type="function">
    <text evidence="1">Catalyzes the reversible oxidation of malate to oxaloacetate.</text>
</comment>
<comment type="catalytic activity">
    <reaction evidence="1">
        <text>(S)-malate + NAD(+) = oxaloacetate + NADH + H(+)</text>
        <dbReference type="Rhea" id="RHEA:21432"/>
        <dbReference type="ChEBI" id="CHEBI:15378"/>
        <dbReference type="ChEBI" id="CHEBI:15589"/>
        <dbReference type="ChEBI" id="CHEBI:16452"/>
        <dbReference type="ChEBI" id="CHEBI:57540"/>
        <dbReference type="ChEBI" id="CHEBI:57945"/>
        <dbReference type="EC" id="1.1.1.37"/>
    </reaction>
</comment>
<comment type="similarity">
    <text evidence="4">Belongs to the LDH/MDH superfamily.</text>
</comment>